<reference evidence="6" key="1">
    <citation type="journal article" date="2005" name="Genome Res.">
        <title>Comparative genome sequencing of Drosophila pseudoobscura: chromosomal, gene, and cis-element evolution.</title>
        <authorList>
            <person name="Richards S."/>
            <person name="Liu Y."/>
            <person name="Bettencourt B.R."/>
            <person name="Hradecky P."/>
            <person name="Letovsky S."/>
            <person name="Nielsen R."/>
            <person name="Thornton K."/>
            <person name="Hubisz M.J."/>
            <person name="Chen R."/>
            <person name="Meisel R.P."/>
            <person name="Couronne O."/>
            <person name="Hua S."/>
            <person name="Smith M.A."/>
            <person name="Zhang P."/>
            <person name="Liu J."/>
            <person name="Bussemaker H.J."/>
            <person name="van Batenburg M.F."/>
            <person name="Howells S.L."/>
            <person name="Scherer S.E."/>
            <person name="Sodergren E."/>
            <person name="Matthews B.B."/>
            <person name="Crosby M.A."/>
            <person name="Schroeder A.J."/>
            <person name="Ortiz-Barrientos D."/>
            <person name="Rives C.M."/>
            <person name="Metzker M.L."/>
            <person name="Muzny D.M."/>
            <person name="Scott G."/>
            <person name="Steffen D."/>
            <person name="Wheeler D.A."/>
            <person name="Worley K.C."/>
            <person name="Havlak P."/>
            <person name="Durbin K.J."/>
            <person name="Egan A."/>
            <person name="Gill R."/>
            <person name="Hume J."/>
            <person name="Morgan M.B."/>
            <person name="Miner G."/>
            <person name="Hamilton C."/>
            <person name="Huang Y."/>
            <person name="Waldron L."/>
            <person name="Verduzco D."/>
            <person name="Clerc-Blankenburg K.P."/>
            <person name="Dubchak I."/>
            <person name="Noor M.A.F."/>
            <person name="Anderson W."/>
            <person name="White K.P."/>
            <person name="Clark A.G."/>
            <person name="Schaeffer S.W."/>
            <person name="Gelbart W.M."/>
            <person name="Weinstock G.M."/>
            <person name="Gibbs R.A."/>
        </authorList>
    </citation>
    <scope>NUCLEOTIDE SEQUENCE [LARGE SCALE GENOMIC DNA]</scope>
    <source>
        <strain>MV2-25 / Tucson 14011-0121.94</strain>
    </source>
</reference>
<protein>
    <recommendedName>
        <fullName evidence="3">Nucleolar protein 6</fullName>
    </recommendedName>
    <alternativeName>
        <fullName evidence="1">Maternal transcript 89Ba</fullName>
    </alternativeName>
</protein>
<feature type="chain" id="PRO_0000383627" description="Nucleolar protein 6">
    <location>
        <begin position="1"/>
        <end position="1212"/>
    </location>
</feature>
<feature type="region of interest" description="Disordered" evidence="5">
    <location>
        <begin position="1"/>
        <end position="72"/>
    </location>
</feature>
<feature type="region of interest" description="Disordered" evidence="5">
    <location>
        <begin position="1156"/>
        <end position="1212"/>
    </location>
</feature>
<feature type="compositionally biased region" description="Basic residues" evidence="5">
    <location>
        <begin position="1197"/>
        <end position="1212"/>
    </location>
</feature>
<accession>Q295U7</accession>
<evidence type="ECO:0000250" key="1">
    <source>
        <dbReference type="UniProtKB" id="Q8IH00"/>
    </source>
</evidence>
<evidence type="ECO:0000250" key="2">
    <source>
        <dbReference type="UniProtKB" id="Q8R5K4"/>
    </source>
</evidence>
<evidence type="ECO:0000250" key="3">
    <source>
        <dbReference type="UniProtKB" id="Q9H6R4"/>
    </source>
</evidence>
<evidence type="ECO:0000255" key="4"/>
<evidence type="ECO:0000256" key="5">
    <source>
        <dbReference type="SAM" id="MobiDB-lite"/>
    </source>
</evidence>
<evidence type="ECO:0000312" key="6">
    <source>
        <dbReference type="EMBL" id="EAL28611.2"/>
    </source>
</evidence>
<gene>
    <name evidence="1" type="primary">Mat89Ba</name>
    <name type="ORF">GA11810</name>
</gene>
<sequence length="1212" mass="137628">MGKIKKILRKGPPATKRPPKAARTESADSALGLDAHSDLEKPATSSDDGFEEPTPKPKPSKKTTTLPGPVSIIAQKKNKFRTDDAKNVKPPTLEEMKELRDTRNLFHSNLFKLQVKEMLEELQLKTKYTEYIDNWMESFTVFTQRLKDGLVEKSQLEVPLNVDKKISGFIFSKPTKEPQLIGAASTGTLLGPKIVVDVALEMPKDCLHKDDYLNLIYDQKRALYLTYVTNQMRSDPAYSQDKFAFNYHGNNPLKPVLELTPAAKQVSKHLQLRLFITAPQSTFKPSRFVPWNNNIRPTYYNDEWDEEEALPSTQHYNASVLFDLTLAQNQALLDKAFKGRRNFQDGLLLLKVWLRQRELDRGFTGFGSHILASFIVYLNQQRILHQSSSSYQVARTVWNQLANTDWTNGITLAPASGQTEQLSTMAGYYDVCFMDVSGQLNLCANVPLGVYQRVRAEAKLAVDLLNDMKLNSFPYIFMQKCPLYTRVDNILKITNYSSIQQMLVLHSKPQMKYDFASYGYPQLLQILTELLQKGLKQRVQAILPIETVSSAWPVESKAPIIGQAIQLGLILDPEHAYEVLDKGPSSNDDPEGSAEFRKFWGEKSNLRRFQDGSITEAVVWGTTKDAPSKKRLIVRQIVMHLLEHHLQLDSKDIQYIAAELDLVYQLSPWFKVSKVKTKLELQQDTDAEALSPNVIRCYDDLARQLHALDDLPLEIVSISSISPVSRYCEPMPVLPQARMMADHIHASHIQRVIIQLGQSGKWPNELSALRALKTAFLIEIGEKLKAQCRLNWSITSEGLLVLKRGFCFLLELAHNKELALLKQEVTERGVTKYVDNPESRALEQRHYILPKVSGALHSLHQSHSAYGPTVLIAKRWLATQLLDDGIWPPMATELLVAHLYQQRNAPQAIAAPQTGFIRFLHLLAHSDWNGELFLLNFNSSWQEQQIGDLEHSFRSDRQSYPPLALATSYDQQHAGRLWTTGESPSLRILSHVSRLARHALEMIETSLQSKDLRFVRPAQLFRGSSEGYDLVIQLKSDLVPNALSYDLGSPFVSFDQPNYLLPRAGKDPLAAIVHQLRSAYSDYAAFFYNPHGGKELAIMWRPPAVFAPKAFKVTELQACTLCDKGKVQVVRETLVEDFKVLLKDFYLRISTPEELKREQREHQNPKRYFNAKPQDNESCSKSKKRKLAKAAKVQAPLKRKSLIKSRPLKSLS</sequence>
<name>NOL6_DROPS</name>
<proteinExistence type="inferred from homology"/>
<organism>
    <name type="scientific">Drosophila pseudoobscura pseudoobscura</name>
    <name type="common">Fruit fly</name>
    <dbReference type="NCBI Taxonomy" id="46245"/>
    <lineage>
        <taxon>Eukaryota</taxon>
        <taxon>Metazoa</taxon>
        <taxon>Ecdysozoa</taxon>
        <taxon>Arthropoda</taxon>
        <taxon>Hexapoda</taxon>
        <taxon>Insecta</taxon>
        <taxon>Pterygota</taxon>
        <taxon>Neoptera</taxon>
        <taxon>Endopterygota</taxon>
        <taxon>Diptera</taxon>
        <taxon>Brachycera</taxon>
        <taxon>Muscomorpha</taxon>
        <taxon>Ephydroidea</taxon>
        <taxon>Drosophilidae</taxon>
        <taxon>Drosophila</taxon>
        <taxon>Sophophora</taxon>
    </lineage>
</organism>
<comment type="function">
    <text evidence="3">Part of the small subunit (SSU) processome, first precursor of the small eukaryotic ribosomal subunit. During the assembly of the SSU processome in the nucleolus, many ribosome biogenesis factors, an RNA chaperone and ribosomal proteins associate with the nascent pre-rRNA and work in concert to generate RNA folding, modifications, rearrangements and cleavage as well as targeted degradation of pre-ribosomal RNA by the RNA exosome.</text>
</comment>
<comment type="subunit">
    <text evidence="3">Part of the small subunit (SSU) processome, composed of more than 70 proteins and the RNA chaperone small nucleolar RNA (snoRNA) U3.</text>
</comment>
<comment type="subcellular location">
    <subcellularLocation>
        <location evidence="3">Nucleus</location>
        <location evidence="3">Nucleolus</location>
    </subcellularLocation>
    <subcellularLocation>
        <location evidence="2">Chromosome</location>
    </subcellularLocation>
    <text evidence="2">Localizes to condensed chromosomes in mitosis.</text>
</comment>
<comment type="similarity">
    <text evidence="4">Belongs to the NRAP family.</text>
</comment>
<dbReference type="EMBL" id="CM000070">
    <property type="protein sequence ID" value="EAL28611.2"/>
    <property type="molecule type" value="Genomic_DNA"/>
</dbReference>
<dbReference type="RefSeq" id="XP_001359465.2">
    <property type="nucleotide sequence ID" value="XM_001359428.3"/>
</dbReference>
<dbReference type="SMR" id="Q295U7"/>
<dbReference type="FunCoup" id="Q295U7">
    <property type="interactions" value="1675"/>
</dbReference>
<dbReference type="STRING" id="46245.Q295U7"/>
<dbReference type="EnsemblMetazoa" id="FBtr0286076">
    <property type="protein sequence ID" value="FBpp0284514"/>
    <property type="gene ID" value="FBgn0071859"/>
</dbReference>
<dbReference type="GeneID" id="4802570"/>
<dbReference type="KEGG" id="dpo:4802570"/>
<dbReference type="CTD" id="41973"/>
<dbReference type="eggNOG" id="KOG2054">
    <property type="taxonomic scope" value="Eukaryota"/>
</dbReference>
<dbReference type="HOGENOM" id="CLU_003502_0_1_1"/>
<dbReference type="InParanoid" id="Q295U7"/>
<dbReference type="OMA" id="NPHGGKE"/>
<dbReference type="Proteomes" id="UP000001819">
    <property type="component" value="Chromosome 2"/>
</dbReference>
<dbReference type="Bgee" id="FBgn0071859">
    <property type="expression patterns" value="Expressed in female reproductive system and 3 other cell types or tissues"/>
</dbReference>
<dbReference type="GO" id="GO:0000794">
    <property type="term" value="C:condensed nuclear chromosome"/>
    <property type="evidence" value="ECO:0000250"/>
    <property type="project" value="UniProtKB"/>
</dbReference>
<dbReference type="GO" id="GO:0032545">
    <property type="term" value="C:CURI complex"/>
    <property type="evidence" value="ECO:0007669"/>
    <property type="project" value="TreeGrafter"/>
</dbReference>
<dbReference type="GO" id="GO:0032040">
    <property type="term" value="C:small-subunit processome"/>
    <property type="evidence" value="ECO:0000250"/>
    <property type="project" value="UniProtKB"/>
</dbReference>
<dbReference type="GO" id="GO:0034456">
    <property type="term" value="C:UTP-C complex"/>
    <property type="evidence" value="ECO:0007669"/>
    <property type="project" value="TreeGrafter"/>
</dbReference>
<dbReference type="GO" id="GO:0003723">
    <property type="term" value="F:RNA binding"/>
    <property type="evidence" value="ECO:0007669"/>
    <property type="project" value="UniProtKB-KW"/>
</dbReference>
<dbReference type="GO" id="GO:0042274">
    <property type="term" value="P:ribosomal small subunit biogenesis"/>
    <property type="evidence" value="ECO:0000250"/>
    <property type="project" value="UniProtKB"/>
</dbReference>
<dbReference type="GO" id="GO:0006364">
    <property type="term" value="P:rRNA processing"/>
    <property type="evidence" value="ECO:0007669"/>
    <property type="project" value="TreeGrafter"/>
</dbReference>
<dbReference type="GO" id="GO:0006409">
    <property type="term" value="P:tRNA export from nucleus"/>
    <property type="evidence" value="ECO:0007669"/>
    <property type="project" value="TreeGrafter"/>
</dbReference>
<dbReference type="FunFam" id="1.10.1410.10:FF:000005">
    <property type="entry name" value="Nucleolar protein 6"/>
    <property type="match status" value="1"/>
</dbReference>
<dbReference type="FunFam" id="1.10.1410.10:FF:000006">
    <property type="entry name" value="Nucleolar protein 6"/>
    <property type="match status" value="1"/>
</dbReference>
<dbReference type="Gene3D" id="1.10.1410.10">
    <property type="match status" value="2"/>
</dbReference>
<dbReference type="Gene3D" id="3.30.70.3030">
    <property type="match status" value="1"/>
</dbReference>
<dbReference type="InterPro" id="IPR005554">
    <property type="entry name" value="NOL6/Upt22"/>
</dbReference>
<dbReference type="InterPro" id="IPR035082">
    <property type="entry name" value="Nrap_D1"/>
</dbReference>
<dbReference type="InterPro" id="IPR035367">
    <property type="entry name" value="Nrap_D2"/>
</dbReference>
<dbReference type="InterPro" id="IPR035368">
    <property type="entry name" value="Nrap_D3"/>
</dbReference>
<dbReference type="InterPro" id="IPR035369">
    <property type="entry name" value="Nrap_D4"/>
</dbReference>
<dbReference type="InterPro" id="IPR035370">
    <property type="entry name" value="Nrap_D5"/>
</dbReference>
<dbReference type="InterPro" id="IPR035371">
    <property type="entry name" value="Nrap_D6"/>
</dbReference>
<dbReference type="PANTHER" id="PTHR17972:SF0">
    <property type="entry name" value="NUCLEOLAR PROTEIN 6"/>
    <property type="match status" value="1"/>
</dbReference>
<dbReference type="PANTHER" id="PTHR17972">
    <property type="entry name" value="NUCLEOLAR RNA-ASSOCIATED PROTEIN"/>
    <property type="match status" value="1"/>
</dbReference>
<dbReference type="Pfam" id="PF03813">
    <property type="entry name" value="Nrap"/>
    <property type="match status" value="1"/>
</dbReference>
<dbReference type="Pfam" id="PF17403">
    <property type="entry name" value="Nrap_D2"/>
    <property type="match status" value="1"/>
</dbReference>
<dbReference type="Pfam" id="PF17404">
    <property type="entry name" value="Nrap_D3"/>
    <property type="match status" value="1"/>
</dbReference>
<dbReference type="Pfam" id="PF17405">
    <property type="entry name" value="Nrap_D4"/>
    <property type="match status" value="1"/>
</dbReference>
<dbReference type="Pfam" id="PF17406">
    <property type="entry name" value="Nrap_D5"/>
    <property type="match status" value="1"/>
</dbReference>
<dbReference type="Pfam" id="PF17407">
    <property type="entry name" value="Nrap_D6"/>
    <property type="match status" value="1"/>
</dbReference>
<keyword id="KW-0158">Chromosome</keyword>
<keyword id="KW-0539">Nucleus</keyword>
<keyword id="KW-1185">Reference proteome</keyword>
<keyword id="KW-0694">RNA-binding</keyword>